<dbReference type="EMBL" id="CP000438">
    <property type="protein sequence ID" value="ABJ12709.1"/>
    <property type="molecule type" value="Genomic_DNA"/>
</dbReference>
<dbReference type="RefSeq" id="WP_003138197.1">
    <property type="nucleotide sequence ID" value="NZ_CP034244.1"/>
</dbReference>
<dbReference type="SMR" id="Q02QU2"/>
<dbReference type="KEGG" id="pau:PA14_19450"/>
<dbReference type="PseudoCAP" id="PA14_19450"/>
<dbReference type="HOGENOM" id="CLU_057831_2_0_6"/>
<dbReference type="BioCyc" id="PAER208963:G1G74-1601-MONOMER"/>
<dbReference type="Proteomes" id="UP000000653">
    <property type="component" value="Chromosome"/>
</dbReference>
<dbReference type="Gene3D" id="1.10.10.10">
    <property type="entry name" value="Winged helix-like DNA-binding domain superfamily/Winged helix DNA-binding domain"/>
    <property type="match status" value="2"/>
</dbReference>
<dbReference type="HAMAP" id="MF_01584">
    <property type="entry name" value="UPF0502"/>
    <property type="match status" value="1"/>
</dbReference>
<dbReference type="InterPro" id="IPR007432">
    <property type="entry name" value="DUF480"/>
</dbReference>
<dbReference type="InterPro" id="IPR036388">
    <property type="entry name" value="WH-like_DNA-bd_sf"/>
</dbReference>
<dbReference type="InterPro" id="IPR036390">
    <property type="entry name" value="WH_DNA-bd_sf"/>
</dbReference>
<dbReference type="PANTHER" id="PTHR38768">
    <property type="entry name" value="UPF0502 PROTEIN YCEH"/>
    <property type="match status" value="1"/>
</dbReference>
<dbReference type="PANTHER" id="PTHR38768:SF1">
    <property type="entry name" value="UPF0502 PROTEIN YCEH"/>
    <property type="match status" value="1"/>
</dbReference>
<dbReference type="Pfam" id="PF04337">
    <property type="entry name" value="DUF480"/>
    <property type="match status" value="1"/>
</dbReference>
<dbReference type="SUPFAM" id="SSF46785">
    <property type="entry name" value="Winged helix' DNA-binding domain"/>
    <property type="match status" value="2"/>
</dbReference>
<proteinExistence type="inferred from homology"/>
<comment type="similarity">
    <text evidence="1">Belongs to the UPF0502 family.</text>
</comment>
<gene>
    <name type="ordered locus">PA14_19450</name>
</gene>
<reference key="1">
    <citation type="journal article" date="2006" name="Genome Biol.">
        <title>Genomic analysis reveals that Pseudomonas aeruginosa virulence is combinatorial.</title>
        <authorList>
            <person name="Lee D.G."/>
            <person name="Urbach J.M."/>
            <person name="Wu G."/>
            <person name="Liberati N.T."/>
            <person name="Feinbaum R.L."/>
            <person name="Miyata S."/>
            <person name="Diggins L.T."/>
            <person name="He J."/>
            <person name="Saucier M."/>
            <person name="Deziel E."/>
            <person name="Friedman L."/>
            <person name="Li L."/>
            <person name="Grills G."/>
            <person name="Montgomery K."/>
            <person name="Kucherlapati R."/>
            <person name="Rahme L.G."/>
            <person name="Ausubel F.M."/>
        </authorList>
    </citation>
    <scope>NUCLEOTIDE SEQUENCE [LARGE SCALE GENOMIC DNA]</scope>
    <source>
        <strain>UCBPP-PA14</strain>
    </source>
</reference>
<protein>
    <recommendedName>
        <fullName evidence="1">UPF0502 protein PA14_19450</fullName>
    </recommendedName>
</protein>
<accession>Q02QU2</accession>
<feature type="chain" id="PRO_0000309403" description="UPF0502 protein PA14_19450">
    <location>
        <begin position="1"/>
        <end position="221"/>
    </location>
</feature>
<sequence length="221" mass="24133">MSTEPNSPFVDDPLSAVDARILGSLVEKQATTPETYPLTLNALVLACNQKTSRDPVMNLTPGQVGQSLRQLEGRGLVRLVMGSRADRWEHTLGKGLELVAPQVALLGLLFLRGPQTLSELLTRSNRLHDFDDVEQIRHHLERLAGRGLAVHLERRAGQREERYMHLLGSQADLEAAVEAMGSDPERAAPAALSADAEARIAELETRLAALEERLARLEGGA</sequence>
<name>Y1945_PSEAB</name>
<evidence type="ECO:0000255" key="1">
    <source>
        <dbReference type="HAMAP-Rule" id="MF_01584"/>
    </source>
</evidence>
<organism>
    <name type="scientific">Pseudomonas aeruginosa (strain UCBPP-PA14)</name>
    <dbReference type="NCBI Taxonomy" id="208963"/>
    <lineage>
        <taxon>Bacteria</taxon>
        <taxon>Pseudomonadati</taxon>
        <taxon>Pseudomonadota</taxon>
        <taxon>Gammaproteobacteria</taxon>
        <taxon>Pseudomonadales</taxon>
        <taxon>Pseudomonadaceae</taxon>
        <taxon>Pseudomonas</taxon>
    </lineage>
</organism>